<evidence type="ECO:0000250" key="1"/>
<evidence type="ECO:0000255" key="2"/>
<evidence type="ECO:0000255" key="3">
    <source>
        <dbReference type="PROSITE-ProRule" id="PRU00043"/>
    </source>
</evidence>
<evidence type="ECO:0000256" key="4">
    <source>
        <dbReference type="SAM" id="MobiDB-lite"/>
    </source>
</evidence>
<reference key="1">
    <citation type="journal article" date="2005" name="Nature">
        <title>Initial sequence of the chimpanzee genome and comparison with the human genome.</title>
        <authorList>
            <consortium name="Chimpanzee sequencing and analysis consortium"/>
        </authorList>
    </citation>
    <scope>NUCLEOTIDE SEQUENCE [LARGE SCALE GENOMIC DNA]</scope>
</reference>
<reference key="2">
    <citation type="journal article" date="2005" name="Genetics">
        <title>Comparative genomics and diversifying selection of the clustered vertebrate protocadherin genes.</title>
        <authorList>
            <person name="Wu Q."/>
        </authorList>
    </citation>
    <scope>IDENTIFICATION</scope>
</reference>
<accession>Q5DRB6</accession>
<sequence>MAAPPARPDHTRLLHICLLLGVLVEIRAEQIRYSVFEEQEEGSVVGNIAKDLGLAPRELAERGVRIVSRGRTQLFALNPRSGTLVTAGRIDREELCDRSPNCVTNLEILLEDTVKILRVEVEIIDVNDNPPSFGTEQREIKVAENENPGTRFPLPEAFDPDVGVNSLQGYQLNSNGYFSLDVQSGADGIKYPELVLERALDREEEAVHHLVLTAFDGGDPVRSGTARILIILVDTNDNAPVFTQPEYHVSVHENVPVGTLLLTVKATDPDEGANGDVTYSFRKVRDKISQLFQLNSLSGDITILGDLDYEDSGFYDIDVEAHDGPGLRARSKVLVTVLDENDNAPEVTVTSLTSSVQETSSPGTVIALFNVHDSDSGGNGLVTCSIPDNLPFTLEKTYGNYYRLLTHRTLDREEVSEYNITVTATDQGTPPLSTETHISLQVMDINDNPPTFPHASYSAYVPENNPRGASILSMTAQDPDSGDNARITYSLAEDTFQGAPLSSYVSINSNTGILYALRSFDYEQFRDLQLLVTASDSGDPPLSSNVSLSLFVLDQNDNVPEILYPTFPTDDSTGVELAPRSADSGYLVTKVVAVDRDSGQNAWLSYRLLKSSEPGLFAVGLHTGEVRTARALLDRDALKQSLVVVVQDHGQPPLSATVTLTVAVADSIPDVLADLGSLKPSADPDDSGLTLYLVVSVAAVSCVFLAFVTVLLALKLRRWHKSRLLHAEGSRLSGVPASHFVGVDGVRAFLQTYSHEVSLTADSRKSHLIFSQPSYADTLISLESCEKSEPLLITQDLLETKGDPNLQQAPPNTDWRFSQAQRPGTSGSQNGDDTGTWPNNQFDTEMLQAMILASASEAADGSSTLGGGAGTMGLSARYGPQFTLQHVPDYRQNVYIPGSNATLTNAAGKRDGKAPAGGNGNKKKSGKKEKK</sequence>
<organism>
    <name type="scientific">Pan troglodytes</name>
    <name type="common">Chimpanzee</name>
    <dbReference type="NCBI Taxonomy" id="9598"/>
    <lineage>
        <taxon>Eukaryota</taxon>
        <taxon>Metazoa</taxon>
        <taxon>Chordata</taxon>
        <taxon>Craniata</taxon>
        <taxon>Vertebrata</taxon>
        <taxon>Euteleostomi</taxon>
        <taxon>Mammalia</taxon>
        <taxon>Eutheria</taxon>
        <taxon>Euarchontoglires</taxon>
        <taxon>Primates</taxon>
        <taxon>Haplorrhini</taxon>
        <taxon>Catarrhini</taxon>
        <taxon>Hominidae</taxon>
        <taxon>Pan</taxon>
    </lineage>
</organism>
<comment type="function">
    <text>Potential calcium-dependent cell-adhesion protein. May be involved in the establishment and maintenance of specific neuronal connections in the brain.</text>
</comment>
<comment type="subcellular location">
    <subcellularLocation>
        <location evidence="1">Cell membrane</location>
        <topology evidence="1">Single-pass type I membrane protein</topology>
    </subcellularLocation>
</comment>
<feature type="signal peptide" evidence="2">
    <location>
        <begin position="1"/>
        <end position="28"/>
    </location>
</feature>
<feature type="chain" id="PRO_0000003955" description="Protocadherin gamma-A4">
    <location>
        <begin position="29"/>
        <end position="931"/>
    </location>
</feature>
<feature type="topological domain" description="Extracellular" evidence="2">
    <location>
        <begin position="29"/>
        <end position="692"/>
    </location>
</feature>
<feature type="transmembrane region" description="Helical" evidence="2">
    <location>
        <begin position="693"/>
        <end position="713"/>
    </location>
</feature>
<feature type="topological domain" description="Cytoplasmic" evidence="2">
    <location>
        <begin position="714"/>
        <end position="931"/>
    </location>
</feature>
<feature type="domain" description="Cadherin 1" evidence="3">
    <location>
        <begin position="29"/>
        <end position="133"/>
    </location>
</feature>
<feature type="domain" description="Cadherin 2" evidence="3">
    <location>
        <begin position="134"/>
        <end position="242"/>
    </location>
</feature>
<feature type="domain" description="Cadherin 3" evidence="3">
    <location>
        <begin position="243"/>
        <end position="347"/>
    </location>
</feature>
<feature type="domain" description="Cadherin 4" evidence="3">
    <location>
        <begin position="348"/>
        <end position="452"/>
    </location>
</feature>
<feature type="domain" description="Cadherin 5" evidence="3">
    <location>
        <begin position="453"/>
        <end position="567"/>
    </location>
</feature>
<feature type="domain" description="Cadherin 6" evidence="3">
    <location>
        <begin position="570"/>
        <end position="682"/>
    </location>
</feature>
<feature type="region of interest" description="Disordered" evidence="4">
    <location>
        <begin position="801"/>
        <end position="840"/>
    </location>
</feature>
<feature type="region of interest" description="Disordered" evidence="4">
    <location>
        <begin position="901"/>
        <end position="931"/>
    </location>
</feature>
<feature type="compositionally biased region" description="Polar residues" evidence="4">
    <location>
        <begin position="805"/>
        <end position="840"/>
    </location>
</feature>
<feature type="compositionally biased region" description="Basic residues" evidence="4">
    <location>
        <begin position="921"/>
        <end position="931"/>
    </location>
</feature>
<feature type="glycosylation site" description="N-linked (GlcNAc...) asparagine" evidence="2">
    <location>
        <position position="419"/>
    </location>
</feature>
<feature type="glycosylation site" description="N-linked (GlcNAc...) asparagine" evidence="2">
    <location>
        <position position="545"/>
    </location>
</feature>
<proteinExistence type="inferred from homology"/>
<name>PCDG4_PANTR</name>
<protein>
    <recommendedName>
        <fullName>Protocadherin gamma-A4</fullName>
        <shortName>PCDH-gamma-A4</shortName>
    </recommendedName>
</protein>
<dbReference type="SMR" id="Q5DRB6"/>
<dbReference type="FunCoup" id="Q5DRB6">
    <property type="interactions" value="11"/>
</dbReference>
<dbReference type="GlyCosmos" id="Q5DRB6">
    <property type="glycosylation" value="2 sites, No reported glycans"/>
</dbReference>
<dbReference type="PaxDb" id="9598-ENSPTRP00000054373"/>
<dbReference type="eggNOG" id="KOG3594">
    <property type="taxonomic scope" value="Eukaryota"/>
</dbReference>
<dbReference type="InParanoid" id="Q5DRB6"/>
<dbReference type="Proteomes" id="UP000002277">
    <property type="component" value="Unplaced"/>
</dbReference>
<dbReference type="GO" id="GO:0005886">
    <property type="term" value="C:plasma membrane"/>
    <property type="evidence" value="ECO:0000318"/>
    <property type="project" value="GO_Central"/>
</dbReference>
<dbReference type="GO" id="GO:0005509">
    <property type="term" value="F:calcium ion binding"/>
    <property type="evidence" value="ECO:0007669"/>
    <property type="project" value="InterPro"/>
</dbReference>
<dbReference type="GO" id="GO:0007155">
    <property type="term" value="P:cell adhesion"/>
    <property type="evidence" value="ECO:0000318"/>
    <property type="project" value="GO_Central"/>
</dbReference>
<dbReference type="GO" id="GO:0007156">
    <property type="term" value="P:homophilic cell adhesion via plasma membrane adhesion molecules"/>
    <property type="evidence" value="ECO:0007669"/>
    <property type="project" value="InterPro"/>
</dbReference>
<dbReference type="GO" id="GO:0007399">
    <property type="term" value="P:nervous system development"/>
    <property type="evidence" value="ECO:0007669"/>
    <property type="project" value="UniProtKB-ARBA"/>
</dbReference>
<dbReference type="CDD" id="cd11304">
    <property type="entry name" value="Cadherin_repeat"/>
    <property type="match status" value="6"/>
</dbReference>
<dbReference type="FunFam" id="2.60.40.60:FF:000004">
    <property type="entry name" value="Protocadherin 1 gamma 2"/>
    <property type="match status" value="1"/>
</dbReference>
<dbReference type="FunFam" id="2.60.40.60:FF:000001">
    <property type="entry name" value="Protocadherin alpha 2"/>
    <property type="match status" value="1"/>
</dbReference>
<dbReference type="FunFam" id="2.60.40.60:FF:000002">
    <property type="entry name" value="Protocadherin alpha 2"/>
    <property type="match status" value="1"/>
</dbReference>
<dbReference type="FunFam" id="2.60.40.60:FF:000006">
    <property type="entry name" value="Protocadherin alpha 2"/>
    <property type="match status" value="1"/>
</dbReference>
<dbReference type="FunFam" id="2.60.40.60:FF:000129">
    <property type="entry name" value="protocadherin alpha-C2 isoform X1"/>
    <property type="match status" value="1"/>
</dbReference>
<dbReference type="FunFam" id="2.60.40.60:FF:000018">
    <property type="entry name" value="Protocadherin gamma c3"/>
    <property type="match status" value="1"/>
</dbReference>
<dbReference type="Gene3D" id="2.60.40.60">
    <property type="entry name" value="Cadherins"/>
    <property type="match status" value="6"/>
</dbReference>
<dbReference type="InterPro" id="IPR002126">
    <property type="entry name" value="Cadherin-like_dom"/>
</dbReference>
<dbReference type="InterPro" id="IPR015919">
    <property type="entry name" value="Cadherin-like_sf"/>
</dbReference>
<dbReference type="InterPro" id="IPR032455">
    <property type="entry name" value="Cadherin_C"/>
</dbReference>
<dbReference type="InterPro" id="IPR031904">
    <property type="entry name" value="Cadherin_CBD"/>
</dbReference>
<dbReference type="InterPro" id="IPR020894">
    <property type="entry name" value="Cadherin_CS"/>
</dbReference>
<dbReference type="InterPro" id="IPR013164">
    <property type="entry name" value="Cadherin_N"/>
</dbReference>
<dbReference type="InterPro" id="IPR050174">
    <property type="entry name" value="Protocadherin/Cadherin-CA"/>
</dbReference>
<dbReference type="PANTHER" id="PTHR24028">
    <property type="entry name" value="CADHERIN-87A"/>
    <property type="match status" value="1"/>
</dbReference>
<dbReference type="PANTHER" id="PTHR24028:SF94">
    <property type="entry name" value="PROTOCADHERIN GAMMA-A4"/>
    <property type="match status" value="1"/>
</dbReference>
<dbReference type="Pfam" id="PF00028">
    <property type="entry name" value="Cadherin"/>
    <property type="match status" value="5"/>
</dbReference>
<dbReference type="Pfam" id="PF08266">
    <property type="entry name" value="Cadherin_2"/>
    <property type="match status" value="1"/>
</dbReference>
<dbReference type="Pfam" id="PF16492">
    <property type="entry name" value="Cadherin_C_2"/>
    <property type="match status" value="1"/>
</dbReference>
<dbReference type="Pfam" id="PF15974">
    <property type="entry name" value="Cadherin_tail"/>
    <property type="match status" value="1"/>
</dbReference>
<dbReference type="PRINTS" id="PR00205">
    <property type="entry name" value="CADHERIN"/>
</dbReference>
<dbReference type="SMART" id="SM00112">
    <property type="entry name" value="CA"/>
    <property type="match status" value="6"/>
</dbReference>
<dbReference type="SUPFAM" id="SSF49313">
    <property type="entry name" value="Cadherin-like"/>
    <property type="match status" value="6"/>
</dbReference>
<dbReference type="PROSITE" id="PS00232">
    <property type="entry name" value="CADHERIN_1"/>
    <property type="match status" value="5"/>
</dbReference>
<dbReference type="PROSITE" id="PS50268">
    <property type="entry name" value="CADHERIN_2"/>
    <property type="match status" value="6"/>
</dbReference>
<keyword id="KW-0106">Calcium</keyword>
<keyword id="KW-0130">Cell adhesion</keyword>
<keyword id="KW-1003">Cell membrane</keyword>
<keyword id="KW-0325">Glycoprotein</keyword>
<keyword id="KW-0472">Membrane</keyword>
<keyword id="KW-1185">Reference proteome</keyword>
<keyword id="KW-0677">Repeat</keyword>
<keyword id="KW-0732">Signal</keyword>
<keyword id="KW-0812">Transmembrane</keyword>
<keyword id="KW-1133">Transmembrane helix</keyword>
<gene>
    <name type="primary">PCDHGA4</name>
</gene>